<keyword id="KW-0001">2Fe-2S</keyword>
<keyword id="KW-0028">Amino-acid biosynthesis</keyword>
<keyword id="KW-0100">Branched-chain amino acid biosynthesis</keyword>
<keyword id="KW-0408">Iron</keyword>
<keyword id="KW-0411">Iron-sulfur</keyword>
<keyword id="KW-0456">Lyase</keyword>
<keyword id="KW-0460">Magnesium</keyword>
<keyword id="KW-0479">Metal-binding</keyword>
<keyword id="KW-1185">Reference proteome</keyword>
<gene>
    <name evidence="1" type="primary">ilvD</name>
    <name type="ordered locus">NGO_0809</name>
</gene>
<sequence>MPEYRSKTSTHGRNMAGARALWRATGVMETDFGKPIIAVANSFTQFVPGHVHLHNMGQLVAREIEKAGAIAKEFNTIAIDDGIAMGHSGMLYSLPSRDLIADSIEYMVNAHCADALVCISNCDKITPGMLIAAMRLNIPTIFVSGGPMEAGKVIGVANIQPERRLDLIDAMIESADDNVSNRQVEEVEQNACPTCGSCSGMFTANSMNCLTEALGLSLPGNGSYLATHAGRKELFLEAGRMIVEITKRYYEQDDETVLPRSIATKKAFENAMTMDIAMGGSTNTILHLLAVANEAGVDFKMADIDRLSRVVPCICKTAPNNHDYYMEDVHRAGGIFAILKELDKAGKLHTDVYTIHAPTLKDAIEKWDVTNPENTRAIERFKAAPGGVRTTQAFSQNRIWKTLDLDREKGCIRDVAHAYSQDGGLAVLFGNIAERGCVVKTAGVDESILKFTGRARVFESQEAAVEGILGNQIVAGNIVIIRYEGPKGGPGMQEMLYPTSYLKSKGLGKACALLTDGRFSGGTSGLSIGHASPEAAEGGAIGLVHEGDTIEIDIPKRSIRLVISDEELAARRAEMEARGSKAWKPENRDRYVSAALRAYGAMATSADKGAVRDVSQIER</sequence>
<protein>
    <recommendedName>
        <fullName evidence="1">Dihydroxy-acid dehydratase</fullName>
        <shortName evidence="1">DAD</shortName>
        <ecNumber evidence="1">4.2.1.9</ecNumber>
    </recommendedName>
</protein>
<accession>Q5F8G6</accession>
<reference key="1">
    <citation type="submission" date="2003-03" db="EMBL/GenBank/DDBJ databases">
        <title>The complete genome sequence of Neisseria gonorrhoeae.</title>
        <authorList>
            <person name="Lewis L.A."/>
            <person name="Gillaspy A.F."/>
            <person name="McLaughlin R.E."/>
            <person name="Gipson M."/>
            <person name="Ducey T.F."/>
            <person name="Ownbey T."/>
            <person name="Hartman K."/>
            <person name="Nydick C."/>
            <person name="Carson M.B."/>
            <person name="Vaughn J."/>
            <person name="Thomson C."/>
            <person name="Song L."/>
            <person name="Lin S."/>
            <person name="Yuan X."/>
            <person name="Najar F."/>
            <person name="Zhan M."/>
            <person name="Ren Q."/>
            <person name="Zhu H."/>
            <person name="Qi S."/>
            <person name="Kenton S.M."/>
            <person name="Lai H."/>
            <person name="White J.D."/>
            <person name="Clifton S."/>
            <person name="Roe B.A."/>
            <person name="Dyer D.W."/>
        </authorList>
    </citation>
    <scope>NUCLEOTIDE SEQUENCE [LARGE SCALE GENOMIC DNA]</scope>
    <source>
        <strain>ATCC 700825 / FA 1090</strain>
    </source>
</reference>
<evidence type="ECO:0000255" key="1">
    <source>
        <dbReference type="HAMAP-Rule" id="MF_00012"/>
    </source>
</evidence>
<proteinExistence type="inferred from homology"/>
<organism>
    <name type="scientific">Neisseria gonorrhoeae (strain ATCC 700825 / FA 1090)</name>
    <dbReference type="NCBI Taxonomy" id="242231"/>
    <lineage>
        <taxon>Bacteria</taxon>
        <taxon>Pseudomonadati</taxon>
        <taxon>Pseudomonadota</taxon>
        <taxon>Betaproteobacteria</taxon>
        <taxon>Neisseriales</taxon>
        <taxon>Neisseriaceae</taxon>
        <taxon>Neisseria</taxon>
    </lineage>
</organism>
<name>ILVD_NEIG1</name>
<feature type="chain" id="PRO_0000225398" description="Dihydroxy-acid dehydratase">
    <location>
        <begin position="1"/>
        <end position="619"/>
    </location>
</feature>
<feature type="active site" description="Proton acceptor" evidence="1">
    <location>
        <position position="520"/>
    </location>
</feature>
<feature type="binding site" evidence="1">
    <location>
        <position position="81"/>
    </location>
    <ligand>
        <name>Mg(2+)</name>
        <dbReference type="ChEBI" id="CHEBI:18420"/>
    </ligand>
</feature>
<feature type="binding site" evidence="1">
    <location>
        <position position="122"/>
    </location>
    <ligand>
        <name>[2Fe-2S] cluster</name>
        <dbReference type="ChEBI" id="CHEBI:190135"/>
    </ligand>
</feature>
<feature type="binding site" evidence="1">
    <location>
        <position position="123"/>
    </location>
    <ligand>
        <name>Mg(2+)</name>
        <dbReference type="ChEBI" id="CHEBI:18420"/>
    </ligand>
</feature>
<feature type="binding site" description="via carbamate group" evidence="1">
    <location>
        <position position="124"/>
    </location>
    <ligand>
        <name>Mg(2+)</name>
        <dbReference type="ChEBI" id="CHEBI:18420"/>
    </ligand>
</feature>
<feature type="binding site" evidence="1">
    <location>
        <position position="198"/>
    </location>
    <ligand>
        <name>[2Fe-2S] cluster</name>
        <dbReference type="ChEBI" id="CHEBI:190135"/>
    </ligand>
</feature>
<feature type="binding site" evidence="1">
    <location>
        <position position="494"/>
    </location>
    <ligand>
        <name>Mg(2+)</name>
        <dbReference type="ChEBI" id="CHEBI:18420"/>
    </ligand>
</feature>
<feature type="modified residue" description="N6-carboxylysine" evidence="1">
    <location>
        <position position="124"/>
    </location>
</feature>
<dbReference type="EC" id="4.2.1.9" evidence="1"/>
<dbReference type="EMBL" id="AE004969">
    <property type="protein sequence ID" value="AAW89521.1"/>
    <property type="molecule type" value="Genomic_DNA"/>
</dbReference>
<dbReference type="RefSeq" id="WP_003688598.1">
    <property type="nucleotide sequence ID" value="NC_002946.2"/>
</dbReference>
<dbReference type="RefSeq" id="YP_207933.1">
    <property type="nucleotide sequence ID" value="NC_002946.2"/>
</dbReference>
<dbReference type="SMR" id="Q5F8G6"/>
<dbReference type="STRING" id="242231.NGO_0809"/>
<dbReference type="KEGG" id="ngo:NGO_0809"/>
<dbReference type="PATRIC" id="fig|242231.10.peg.958"/>
<dbReference type="HOGENOM" id="CLU_014271_4_2_4"/>
<dbReference type="UniPathway" id="UPA00047">
    <property type="reaction ID" value="UER00057"/>
</dbReference>
<dbReference type="UniPathway" id="UPA00049">
    <property type="reaction ID" value="UER00061"/>
</dbReference>
<dbReference type="Proteomes" id="UP000000535">
    <property type="component" value="Chromosome"/>
</dbReference>
<dbReference type="GO" id="GO:0005829">
    <property type="term" value="C:cytosol"/>
    <property type="evidence" value="ECO:0007669"/>
    <property type="project" value="TreeGrafter"/>
</dbReference>
<dbReference type="GO" id="GO:0051537">
    <property type="term" value="F:2 iron, 2 sulfur cluster binding"/>
    <property type="evidence" value="ECO:0007669"/>
    <property type="project" value="UniProtKB-UniRule"/>
</dbReference>
<dbReference type="GO" id="GO:0004160">
    <property type="term" value="F:dihydroxy-acid dehydratase activity"/>
    <property type="evidence" value="ECO:0007669"/>
    <property type="project" value="UniProtKB-UniRule"/>
</dbReference>
<dbReference type="GO" id="GO:0000287">
    <property type="term" value="F:magnesium ion binding"/>
    <property type="evidence" value="ECO:0007669"/>
    <property type="project" value="UniProtKB-UniRule"/>
</dbReference>
<dbReference type="GO" id="GO:0009097">
    <property type="term" value="P:isoleucine biosynthetic process"/>
    <property type="evidence" value="ECO:0007669"/>
    <property type="project" value="UniProtKB-UniRule"/>
</dbReference>
<dbReference type="GO" id="GO:0009099">
    <property type="term" value="P:L-valine biosynthetic process"/>
    <property type="evidence" value="ECO:0007669"/>
    <property type="project" value="UniProtKB-UniRule"/>
</dbReference>
<dbReference type="FunFam" id="3.50.30.80:FF:000001">
    <property type="entry name" value="Dihydroxy-acid dehydratase"/>
    <property type="match status" value="1"/>
</dbReference>
<dbReference type="Gene3D" id="3.50.30.80">
    <property type="entry name" value="IlvD/EDD C-terminal domain-like"/>
    <property type="match status" value="1"/>
</dbReference>
<dbReference type="HAMAP" id="MF_00012">
    <property type="entry name" value="IlvD"/>
    <property type="match status" value="1"/>
</dbReference>
<dbReference type="InterPro" id="IPR042096">
    <property type="entry name" value="Dihydro-acid_dehy_C"/>
</dbReference>
<dbReference type="InterPro" id="IPR004404">
    <property type="entry name" value="DihydroxyA_deHydtase"/>
</dbReference>
<dbReference type="InterPro" id="IPR020558">
    <property type="entry name" value="DiOHA_6PGluconate_deHydtase_CS"/>
</dbReference>
<dbReference type="InterPro" id="IPR056740">
    <property type="entry name" value="ILV_EDD_C"/>
</dbReference>
<dbReference type="InterPro" id="IPR000581">
    <property type="entry name" value="ILV_EDD_N"/>
</dbReference>
<dbReference type="InterPro" id="IPR037237">
    <property type="entry name" value="IlvD/EDD_N"/>
</dbReference>
<dbReference type="NCBIfam" id="TIGR00110">
    <property type="entry name" value="ilvD"/>
    <property type="match status" value="1"/>
</dbReference>
<dbReference type="NCBIfam" id="NF009103">
    <property type="entry name" value="PRK12448.1"/>
    <property type="match status" value="1"/>
</dbReference>
<dbReference type="PANTHER" id="PTHR43661">
    <property type="entry name" value="D-XYLONATE DEHYDRATASE"/>
    <property type="match status" value="1"/>
</dbReference>
<dbReference type="PANTHER" id="PTHR43661:SF3">
    <property type="entry name" value="D-XYLONATE DEHYDRATASE YAGF-RELATED"/>
    <property type="match status" value="1"/>
</dbReference>
<dbReference type="Pfam" id="PF24877">
    <property type="entry name" value="ILV_EDD_C"/>
    <property type="match status" value="1"/>
</dbReference>
<dbReference type="Pfam" id="PF00920">
    <property type="entry name" value="ILVD_EDD_N"/>
    <property type="match status" value="1"/>
</dbReference>
<dbReference type="SUPFAM" id="SSF143975">
    <property type="entry name" value="IlvD/EDD N-terminal domain-like"/>
    <property type="match status" value="1"/>
</dbReference>
<dbReference type="SUPFAM" id="SSF52016">
    <property type="entry name" value="LeuD/IlvD-like"/>
    <property type="match status" value="1"/>
</dbReference>
<dbReference type="PROSITE" id="PS00886">
    <property type="entry name" value="ILVD_EDD_1"/>
    <property type="match status" value="1"/>
</dbReference>
<dbReference type="PROSITE" id="PS00887">
    <property type="entry name" value="ILVD_EDD_2"/>
    <property type="match status" value="1"/>
</dbReference>
<comment type="function">
    <text evidence="1">Functions in the biosynthesis of branched-chain amino acids. Catalyzes the dehydration of (2R,3R)-2,3-dihydroxy-3-methylpentanoate (2,3-dihydroxy-3-methylvalerate) into 2-oxo-3-methylpentanoate (2-oxo-3-methylvalerate) and of (2R)-2,3-dihydroxy-3-methylbutanoate (2,3-dihydroxyisovalerate) into 2-oxo-3-methylbutanoate (2-oxoisovalerate), the penultimate precursor to L-isoleucine and L-valine, respectively.</text>
</comment>
<comment type="catalytic activity">
    <reaction evidence="1">
        <text>(2R)-2,3-dihydroxy-3-methylbutanoate = 3-methyl-2-oxobutanoate + H2O</text>
        <dbReference type="Rhea" id="RHEA:24809"/>
        <dbReference type="ChEBI" id="CHEBI:11851"/>
        <dbReference type="ChEBI" id="CHEBI:15377"/>
        <dbReference type="ChEBI" id="CHEBI:49072"/>
        <dbReference type="EC" id="4.2.1.9"/>
    </reaction>
    <physiologicalReaction direction="left-to-right" evidence="1">
        <dbReference type="Rhea" id="RHEA:24810"/>
    </physiologicalReaction>
</comment>
<comment type="catalytic activity">
    <reaction evidence="1">
        <text>(2R,3R)-2,3-dihydroxy-3-methylpentanoate = (S)-3-methyl-2-oxopentanoate + H2O</text>
        <dbReference type="Rhea" id="RHEA:27694"/>
        <dbReference type="ChEBI" id="CHEBI:15377"/>
        <dbReference type="ChEBI" id="CHEBI:35146"/>
        <dbReference type="ChEBI" id="CHEBI:49258"/>
        <dbReference type="EC" id="4.2.1.9"/>
    </reaction>
    <physiologicalReaction direction="left-to-right" evidence="1">
        <dbReference type="Rhea" id="RHEA:27695"/>
    </physiologicalReaction>
</comment>
<comment type="cofactor">
    <cofactor evidence="1">
        <name>[2Fe-2S] cluster</name>
        <dbReference type="ChEBI" id="CHEBI:190135"/>
    </cofactor>
    <text evidence="1">Binds 1 [2Fe-2S] cluster per subunit. This cluster acts as a Lewis acid cofactor.</text>
</comment>
<comment type="cofactor">
    <cofactor evidence="1">
        <name>Mg(2+)</name>
        <dbReference type="ChEBI" id="CHEBI:18420"/>
    </cofactor>
</comment>
<comment type="pathway">
    <text evidence="1">Amino-acid biosynthesis; L-isoleucine biosynthesis; L-isoleucine from 2-oxobutanoate: step 3/4.</text>
</comment>
<comment type="pathway">
    <text evidence="1">Amino-acid biosynthesis; L-valine biosynthesis; L-valine from pyruvate: step 3/4.</text>
</comment>
<comment type="subunit">
    <text evidence="1">Homodimer.</text>
</comment>
<comment type="similarity">
    <text evidence="1">Belongs to the IlvD/Edd family.</text>
</comment>